<keyword id="KW-0560">Oxidoreductase</keyword>
<name>Y2036_STAES</name>
<evidence type="ECO:0000250" key="1"/>
<evidence type="ECO:0000305" key="2"/>
<organism>
    <name type="scientific">Staphylococcus epidermidis (strain ATCC 12228 / FDA PCI 1200)</name>
    <dbReference type="NCBI Taxonomy" id="176280"/>
    <lineage>
        <taxon>Bacteria</taxon>
        <taxon>Bacillati</taxon>
        <taxon>Bacillota</taxon>
        <taxon>Bacilli</taxon>
        <taxon>Bacillales</taxon>
        <taxon>Staphylococcaceae</taxon>
        <taxon>Staphylococcus</taxon>
    </lineage>
</organism>
<accession>Q8CN40</accession>
<reference key="1">
    <citation type="journal article" date="2003" name="Mol. Microbiol.">
        <title>Genome-based analysis of virulence genes in a non-biofilm-forming Staphylococcus epidermidis strain (ATCC 12228).</title>
        <authorList>
            <person name="Zhang Y.-Q."/>
            <person name="Ren S.-X."/>
            <person name="Li H.-L."/>
            <person name="Wang Y.-X."/>
            <person name="Fu G."/>
            <person name="Yang J."/>
            <person name="Qin Z.-Q."/>
            <person name="Miao Y.-G."/>
            <person name="Wang W.-Y."/>
            <person name="Chen R.-S."/>
            <person name="Shen Y."/>
            <person name="Chen Z."/>
            <person name="Yuan Z.-H."/>
            <person name="Zhao G.-P."/>
            <person name="Qu D."/>
            <person name="Danchin A."/>
            <person name="Wen Y.-M."/>
        </authorList>
    </citation>
    <scope>NUCLEOTIDE SEQUENCE [LARGE SCALE GENOMIC DNA]</scope>
    <source>
        <strain>ATCC 12228 / FDA PCI 1200</strain>
    </source>
</reference>
<comment type="similarity">
    <text evidence="2">Belongs to the short-chain dehydrogenases/reductases (SDR) family.</text>
</comment>
<dbReference type="EC" id="1.-.-.-"/>
<dbReference type="EMBL" id="AE015929">
    <property type="protein sequence ID" value="AAO05677.1"/>
    <property type="molecule type" value="Genomic_DNA"/>
</dbReference>
<dbReference type="RefSeq" id="NP_765591.1">
    <property type="nucleotide sequence ID" value="NC_004461.1"/>
</dbReference>
<dbReference type="RefSeq" id="WP_002438215.1">
    <property type="nucleotide sequence ID" value="NZ_WBME01000003.1"/>
</dbReference>
<dbReference type="SMR" id="Q8CN40"/>
<dbReference type="KEGG" id="sep:SE_2036"/>
<dbReference type="PATRIC" id="fig|176280.10.peg.1989"/>
<dbReference type="eggNOG" id="COG4221">
    <property type="taxonomic scope" value="Bacteria"/>
</dbReference>
<dbReference type="HOGENOM" id="CLU_010194_2_10_9"/>
<dbReference type="OrthoDB" id="9775296at2"/>
<dbReference type="Proteomes" id="UP000001411">
    <property type="component" value="Chromosome"/>
</dbReference>
<dbReference type="GO" id="GO:0016491">
    <property type="term" value="F:oxidoreductase activity"/>
    <property type="evidence" value="ECO:0007669"/>
    <property type="project" value="UniProtKB-KW"/>
</dbReference>
<dbReference type="CDD" id="cd05233">
    <property type="entry name" value="SDR_c"/>
    <property type="match status" value="1"/>
</dbReference>
<dbReference type="FunFam" id="3.40.50.720:FF:000047">
    <property type="entry name" value="NADP-dependent L-serine/L-allo-threonine dehydrogenase"/>
    <property type="match status" value="1"/>
</dbReference>
<dbReference type="Gene3D" id="3.40.50.720">
    <property type="entry name" value="NAD(P)-binding Rossmann-like Domain"/>
    <property type="match status" value="1"/>
</dbReference>
<dbReference type="InterPro" id="IPR036291">
    <property type="entry name" value="NAD(P)-bd_dom_sf"/>
</dbReference>
<dbReference type="InterPro" id="IPR002347">
    <property type="entry name" value="SDR_fam"/>
</dbReference>
<dbReference type="PANTHER" id="PTHR43115">
    <property type="entry name" value="DEHYDROGENASE/REDUCTASE SDR FAMILY MEMBER 11"/>
    <property type="match status" value="1"/>
</dbReference>
<dbReference type="PANTHER" id="PTHR43115:SF4">
    <property type="entry name" value="DEHYDROGENASE_REDUCTASE SDR FAMILY MEMBER 11"/>
    <property type="match status" value="1"/>
</dbReference>
<dbReference type="Pfam" id="PF00106">
    <property type="entry name" value="adh_short"/>
    <property type="match status" value="1"/>
</dbReference>
<dbReference type="PIRSF" id="PIRSF000126">
    <property type="entry name" value="11-beta-HSD1"/>
    <property type="match status" value="1"/>
</dbReference>
<dbReference type="PRINTS" id="PR00081">
    <property type="entry name" value="GDHRDH"/>
</dbReference>
<dbReference type="PRINTS" id="PR00080">
    <property type="entry name" value="SDRFAMILY"/>
</dbReference>
<dbReference type="SMART" id="SM00822">
    <property type="entry name" value="PKS_KR"/>
    <property type="match status" value="1"/>
</dbReference>
<dbReference type="SUPFAM" id="SSF51735">
    <property type="entry name" value="NAD(P)-binding Rossmann-fold domains"/>
    <property type="match status" value="1"/>
</dbReference>
<feature type="chain" id="PRO_0000300478" description="Uncharacterized oxidoreductase SE_2036">
    <location>
        <begin position="1"/>
        <end position="230"/>
    </location>
</feature>
<feature type="active site" description="Proton acceptor" evidence="1">
    <location>
        <position position="152"/>
    </location>
</feature>
<feature type="binding site" evidence="1">
    <location>
        <begin position="10"/>
        <end position="34"/>
    </location>
    <ligand>
        <name>NADP(+)</name>
        <dbReference type="ChEBI" id="CHEBI:58349"/>
    </ligand>
</feature>
<feature type="binding site" evidence="1">
    <location>
        <position position="139"/>
    </location>
    <ligand>
        <name>substrate</name>
    </ligand>
</feature>
<gene>
    <name type="ordered locus">SE_2036</name>
</gene>
<protein>
    <recommendedName>
        <fullName>Uncharacterized oxidoreductase SE_2036</fullName>
        <ecNumber>1.-.-.-</ecNumber>
    </recommendedName>
</protein>
<sequence>MAKVKEKVAVVTGASSGIGEAIAKKLSQQGASIVLVGRNEQRLNEIAQQLNTPAKVVSADVTVKSNIDDMLKAVIDHFGHIDIVVNSAGQSLSSKITDYNVEQWDTMIDVNIKGTLHVLQATLPYLLKQSSGHIINLASVSGFEPTKTNAVYGATKAAIHAITQSLEKELARTGVKVTSISPGMVDTPMTEGTDFGERKKLEAQNIADAVVYALTQPSHVNVNEVTIRPV</sequence>
<proteinExistence type="inferred from homology"/>